<comment type="similarity">
    <text evidence="2">Belongs to the QWRF family.</text>
</comment>
<comment type="sequence caution" evidence="2">
    <conflict type="erroneous gene model prediction">
        <sequence resource="EMBL-CDS" id="AAC63675"/>
    </conflict>
</comment>
<organism>
    <name type="scientific">Arabidopsis thaliana</name>
    <name type="common">Mouse-ear cress</name>
    <dbReference type="NCBI Taxonomy" id="3702"/>
    <lineage>
        <taxon>Eukaryota</taxon>
        <taxon>Viridiplantae</taxon>
        <taxon>Streptophyta</taxon>
        <taxon>Embryophyta</taxon>
        <taxon>Tracheophyta</taxon>
        <taxon>Spermatophyta</taxon>
        <taxon>Magnoliopsida</taxon>
        <taxon>eudicotyledons</taxon>
        <taxon>Gunneridae</taxon>
        <taxon>Pentapetalae</taxon>
        <taxon>rosids</taxon>
        <taxon>malvids</taxon>
        <taxon>Brassicales</taxon>
        <taxon>Brassicaceae</taxon>
        <taxon>Camelineae</taxon>
        <taxon>Arabidopsis</taxon>
    </lineage>
</organism>
<accession>F4INP9</accession>
<accession>O82235</accession>
<protein>
    <recommendedName>
        <fullName>QWRF motif-containing protein 4</fullName>
    </recommendedName>
</protein>
<dbReference type="EMBL" id="AC005170">
    <property type="protein sequence ID" value="AAC63675.1"/>
    <property type="status" value="ALT_SEQ"/>
    <property type="molecule type" value="Genomic_DNA"/>
</dbReference>
<dbReference type="EMBL" id="CP002685">
    <property type="protein sequence ID" value="AEC07525.1"/>
    <property type="molecule type" value="Genomic_DNA"/>
</dbReference>
<dbReference type="EMBL" id="CP002685">
    <property type="protein sequence ID" value="AEC07526.1"/>
    <property type="molecule type" value="Genomic_DNA"/>
</dbReference>
<dbReference type="EMBL" id="CP002685">
    <property type="protein sequence ID" value="ANM62401.1"/>
    <property type="molecule type" value="Genomic_DNA"/>
</dbReference>
<dbReference type="PIR" id="C84632">
    <property type="entry name" value="C84632"/>
</dbReference>
<dbReference type="RefSeq" id="NP_001031406.1">
    <property type="nucleotide sequence ID" value="NM_001036329.3"/>
</dbReference>
<dbReference type="RefSeq" id="NP_001324560.1">
    <property type="nucleotide sequence ID" value="NM_001335916.1"/>
</dbReference>
<dbReference type="RefSeq" id="NP_179985.2">
    <property type="nucleotide sequence ID" value="NM_127969.3"/>
</dbReference>
<dbReference type="FunCoup" id="F4INP9">
    <property type="interactions" value="31"/>
</dbReference>
<dbReference type="STRING" id="3702.F4INP9"/>
<dbReference type="iPTMnet" id="F4INP9"/>
<dbReference type="PaxDb" id="3702-AT2G24070.2"/>
<dbReference type="EnsemblPlants" id="AT2G24070.1">
    <property type="protein sequence ID" value="AT2G24070.1"/>
    <property type="gene ID" value="AT2G24070"/>
</dbReference>
<dbReference type="EnsemblPlants" id="AT2G24070.2">
    <property type="protein sequence ID" value="AT2G24070.2"/>
    <property type="gene ID" value="AT2G24070"/>
</dbReference>
<dbReference type="EnsemblPlants" id="AT2G24070.3">
    <property type="protein sequence ID" value="AT2G24070.3"/>
    <property type="gene ID" value="AT2G24070"/>
</dbReference>
<dbReference type="GeneID" id="816941"/>
<dbReference type="Gramene" id="AT2G24070.1">
    <property type="protein sequence ID" value="AT2G24070.1"/>
    <property type="gene ID" value="AT2G24070"/>
</dbReference>
<dbReference type="Gramene" id="AT2G24070.2">
    <property type="protein sequence ID" value="AT2G24070.2"/>
    <property type="gene ID" value="AT2G24070"/>
</dbReference>
<dbReference type="Gramene" id="AT2G24070.3">
    <property type="protein sequence ID" value="AT2G24070.3"/>
    <property type="gene ID" value="AT2G24070"/>
</dbReference>
<dbReference type="KEGG" id="ath:AT2G24070"/>
<dbReference type="Araport" id="AT2G24070"/>
<dbReference type="TAIR" id="AT2G24070">
    <property type="gene designation" value="QWRF4"/>
</dbReference>
<dbReference type="eggNOG" id="ENOG502QR63">
    <property type="taxonomic scope" value="Eukaryota"/>
</dbReference>
<dbReference type="HOGENOM" id="CLU_025164_2_0_1"/>
<dbReference type="InParanoid" id="F4INP9"/>
<dbReference type="OMA" id="VWHATSD"/>
<dbReference type="PRO" id="PR:F4INP9"/>
<dbReference type="Proteomes" id="UP000006548">
    <property type="component" value="Chromosome 2"/>
</dbReference>
<dbReference type="ExpressionAtlas" id="F4INP9">
    <property type="expression patterns" value="baseline and differential"/>
</dbReference>
<dbReference type="InterPro" id="IPR007573">
    <property type="entry name" value="QWRF"/>
</dbReference>
<dbReference type="PANTHER" id="PTHR31807">
    <property type="entry name" value="AUGMIN FAMILY MEMBER"/>
    <property type="match status" value="1"/>
</dbReference>
<dbReference type="PANTHER" id="PTHR31807:SF30">
    <property type="entry name" value="QWRF MOTIF-CONTAINING PROTEIN 4"/>
    <property type="match status" value="1"/>
</dbReference>
<dbReference type="Pfam" id="PF04484">
    <property type="entry name" value="QWRF"/>
    <property type="match status" value="1"/>
</dbReference>
<gene>
    <name type="primary">QWRF4</name>
    <name type="ordered locus">At2g24070</name>
    <name type="ORF">T29E15.27</name>
</gene>
<reference key="1">
    <citation type="journal article" date="1999" name="Nature">
        <title>Sequence and analysis of chromosome 2 of the plant Arabidopsis thaliana.</title>
        <authorList>
            <person name="Lin X."/>
            <person name="Kaul S."/>
            <person name="Rounsley S.D."/>
            <person name="Shea T.P."/>
            <person name="Benito M.-I."/>
            <person name="Town C.D."/>
            <person name="Fujii C.Y."/>
            <person name="Mason T.M."/>
            <person name="Bowman C.L."/>
            <person name="Barnstead M.E."/>
            <person name="Feldblyum T.V."/>
            <person name="Buell C.R."/>
            <person name="Ketchum K.A."/>
            <person name="Lee J.J."/>
            <person name="Ronning C.M."/>
            <person name="Koo H.L."/>
            <person name="Moffat K.S."/>
            <person name="Cronin L.A."/>
            <person name="Shen M."/>
            <person name="Pai G."/>
            <person name="Van Aken S."/>
            <person name="Umayam L."/>
            <person name="Tallon L.J."/>
            <person name="Gill J.E."/>
            <person name="Adams M.D."/>
            <person name="Carrera A.J."/>
            <person name="Creasy T.H."/>
            <person name="Goodman H.M."/>
            <person name="Somerville C.R."/>
            <person name="Copenhaver G.P."/>
            <person name="Preuss D."/>
            <person name="Nierman W.C."/>
            <person name="White O."/>
            <person name="Eisen J.A."/>
            <person name="Salzberg S.L."/>
            <person name="Fraser C.M."/>
            <person name="Venter J.C."/>
        </authorList>
    </citation>
    <scope>NUCLEOTIDE SEQUENCE [LARGE SCALE GENOMIC DNA]</scope>
    <source>
        <strain>cv. Columbia</strain>
    </source>
</reference>
<reference key="2">
    <citation type="journal article" date="2017" name="Plant J.">
        <title>Araport11: a complete reannotation of the Arabidopsis thaliana reference genome.</title>
        <authorList>
            <person name="Cheng C.Y."/>
            <person name="Krishnakumar V."/>
            <person name="Chan A.P."/>
            <person name="Thibaud-Nissen F."/>
            <person name="Schobel S."/>
            <person name="Town C.D."/>
        </authorList>
    </citation>
    <scope>GENOME REANNOTATION</scope>
    <source>
        <strain>cv. Columbia</strain>
    </source>
</reference>
<reference key="3">
    <citation type="journal article" date="2010" name="Plant Cell">
        <title>The cytoskeleton and the peroxisomal-targeted snowy cotyledon3 protein are required for chloroplast development in Arabidopsis.</title>
        <authorList>
            <person name="Albrecht V."/>
            <person name="Simkova K."/>
            <person name="Carrie C."/>
            <person name="Delannoy E."/>
            <person name="Giraud E."/>
            <person name="Whelan J."/>
            <person name="Small I.D."/>
            <person name="Apel K."/>
            <person name="Badger M.R."/>
            <person name="Pogson B.J."/>
        </authorList>
    </citation>
    <scope>GENE FAMILY</scope>
    <scope>NOMENCLATURE</scope>
</reference>
<keyword id="KW-1185">Reference proteome</keyword>
<feature type="chain" id="PRO_0000423625" description="QWRF motif-containing protein 4">
    <location>
        <begin position="1"/>
        <end position="609"/>
    </location>
</feature>
<feature type="region of interest" description="Disordered" evidence="1">
    <location>
        <begin position="1"/>
        <end position="227"/>
    </location>
</feature>
<feature type="region of interest" description="Disordered" evidence="1">
    <location>
        <begin position="271"/>
        <end position="369"/>
    </location>
</feature>
<feature type="region of interest" description="Disordered" evidence="1">
    <location>
        <begin position="588"/>
        <end position="609"/>
    </location>
</feature>
<feature type="short sequence motif" description="QWRF motif">
    <location>
        <begin position="407"/>
        <end position="410"/>
    </location>
</feature>
<feature type="compositionally biased region" description="Polar residues" evidence="1">
    <location>
        <begin position="11"/>
        <end position="21"/>
    </location>
</feature>
<feature type="compositionally biased region" description="Polar residues" evidence="1">
    <location>
        <begin position="46"/>
        <end position="57"/>
    </location>
</feature>
<feature type="compositionally biased region" description="Low complexity" evidence="1">
    <location>
        <begin position="98"/>
        <end position="110"/>
    </location>
</feature>
<feature type="compositionally biased region" description="Low complexity" evidence="1">
    <location>
        <begin position="129"/>
        <end position="143"/>
    </location>
</feature>
<feature type="compositionally biased region" description="Polar residues" evidence="1">
    <location>
        <begin position="151"/>
        <end position="180"/>
    </location>
</feature>
<feature type="compositionally biased region" description="Low complexity" evidence="1">
    <location>
        <begin position="271"/>
        <end position="285"/>
    </location>
</feature>
<feature type="compositionally biased region" description="Low complexity" evidence="1">
    <location>
        <begin position="302"/>
        <end position="332"/>
    </location>
</feature>
<name>QWRF4_ARATH</name>
<evidence type="ECO:0000256" key="1">
    <source>
        <dbReference type="SAM" id="MobiDB-lite"/>
    </source>
</evidence>
<evidence type="ECO:0000305" key="2"/>
<proteinExistence type="inferred from homology"/>
<sequence>MQVGSKKASMGKQQQSVSDATSPRPPLAPSEKNNVGSVTRRARTMEVSSRYRSPTPTKTRRCPSPIVTRTAPSSSPESFLKRAVSAERNRGPSTPTTPVSDVLVDLPVSSRRLSTGRLPESLWPSTMRSLSVSFQSDSVSVPVSKKEKPLVTSSTDRTLRPSSSNIAHKQQSETTSVTRKQTPERKRSPLKGKNVSPGQSENSKPMDGSHSMLIPPQHRWSGRIRGNRSFDLGDKAVRRVSLPLSNKSSRHKKSSSDITRLFSCYDNGRLEVSSSTTSEDSSSTESLKHFSTSSLPRLHPMSAPGSRTASPSRSSFSSSSSSNSRGMSPSRGVSPMRGLSPVGNRSLVRSSTPPSRGVSPSRIRQTAQSSSTNTSVLSFIADVKKGKKATYIEDVHQLRLLYNRYSQWRFANARAEGVSYVQSLIAKETLYNVWHAISDLRDLVTTQRICLQQLKLEIKLRSILNDQMVCLEDWAMVEREHISSLAGAIGDLEANTLRLPLAGGTKADLGSLKLAMSSALDVMQSMGSSIWSLHSQMEEMNKLVSDLAVIAKTENFLLDKCENLLASTAVMEIEERSLKTHLIQKKQEEEVRDDAESSPLLPLSKFQWP</sequence>